<organism>
    <name type="scientific">Arthroderma benhamiae (strain ATCC MYA-4681 / CBS 112371)</name>
    <name type="common">Trichophyton mentagrophytes</name>
    <dbReference type="NCBI Taxonomy" id="663331"/>
    <lineage>
        <taxon>Eukaryota</taxon>
        <taxon>Fungi</taxon>
        <taxon>Dikarya</taxon>
        <taxon>Ascomycota</taxon>
        <taxon>Pezizomycotina</taxon>
        <taxon>Eurotiomycetes</taxon>
        <taxon>Eurotiomycetidae</taxon>
        <taxon>Onygenales</taxon>
        <taxon>Arthrodermataceae</taxon>
        <taxon>Trichophyton</taxon>
    </lineage>
</organism>
<reference key="1">
    <citation type="journal article" date="2011" name="Genome Biol.">
        <title>Comparative and functional genomics provide insights into the pathogenicity of dermatophytic fungi.</title>
        <authorList>
            <person name="Burmester A."/>
            <person name="Shelest E."/>
            <person name="Gloeckner G."/>
            <person name="Heddergott C."/>
            <person name="Schindler S."/>
            <person name="Staib P."/>
            <person name="Heidel A."/>
            <person name="Felder M."/>
            <person name="Petzold A."/>
            <person name="Szafranski K."/>
            <person name="Feuermann M."/>
            <person name="Pedruzzi I."/>
            <person name="Priebe S."/>
            <person name="Groth M."/>
            <person name="Winkler R."/>
            <person name="Li W."/>
            <person name="Kniemeyer O."/>
            <person name="Schroeckh V."/>
            <person name="Hertweck C."/>
            <person name="Hube B."/>
            <person name="White T.C."/>
            <person name="Platzer M."/>
            <person name="Guthke R."/>
            <person name="Heitman J."/>
            <person name="Woestemeyer J."/>
            <person name="Zipfel P.F."/>
            <person name="Monod M."/>
            <person name="Brakhage A.A."/>
        </authorList>
    </citation>
    <scope>NUCLEOTIDE SEQUENCE [LARGE SCALE GENOMIC DNA]</scope>
    <source>
        <strain>ATCC MYA-4681 / CBS 112371</strain>
    </source>
</reference>
<reference key="2">
    <citation type="journal article" date="2011" name="Proteomics">
        <title>Identification of novel secreted proteases during extracellular proteolysis by dermatophytes at acidic pH.</title>
        <authorList>
            <person name="Sriranganadane D."/>
            <person name="Waridel P."/>
            <person name="Salamin K."/>
            <person name="Feuermann M."/>
            <person name="Mignon B."/>
            <person name="Staib P."/>
            <person name="Neuhaus J.M."/>
            <person name="Quadroni M."/>
            <person name="Monod M."/>
        </authorList>
    </citation>
    <scope>IDENTIFICATION BY MASS SPECTROMETRY</scope>
    <scope>SUBCELLULAR LOCATION</scope>
</reference>
<proteinExistence type="evidence at protein level"/>
<sequence length="186" mass="18266">MKFSQAVIALAAATVVSAQLPDVPQCSLPCFLDALTTDGCSELTDFKCHCSKPELPAKITPCVKSKCPVAEQVSVSNAVVKQCSEAGAPVSIPPVEESSSKPSEPSTSEAPTASPTESTPAPTTPAPTGTGSPSGTGAPGGPSGTGTFTNTGVPTQSTPIYTGAASGLSANIGGMGAAILAIAAYL</sequence>
<protein>
    <recommendedName>
        <fullName evidence="8">GPI-anchored hemophore ARB_02741</fullName>
    </recommendedName>
    <alternativeName>
        <fullName evidence="8">GPI-anchored CFEM domain protein ARB_02741</fullName>
    </alternativeName>
</protein>
<gene>
    <name type="ORF">ARB_02741</name>
</gene>
<accession>D4B2Q8</accession>
<comment type="function">
    <text evidence="1">GPI-anchored cell wall protein involved in stabilizing the cell wall (By similarity).</text>
</comment>
<comment type="subcellular location">
    <subcellularLocation>
        <location evidence="7">Secreted</location>
    </subcellularLocation>
    <subcellularLocation>
        <location evidence="2">Secreted</location>
        <location evidence="2">Cell wall</location>
    </subcellularLocation>
    <subcellularLocation>
        <location evidence="1">Cell membrane</location>
        <topology evidence="1">Lipid-anchor</topology>
        <topology evidence="1">GPI-anchor</topology>
    </subcellularLocation>
    <text evidence="2">Found anchored in the cell membrane as well as a covalently-linked GPI-modified cell wall protein (GPI-CWP).</text>
</comment>
<comment type="domain">
    <text evidence="3">The CFEM domain is involved in heme-binding and contains 8 cysteines and is found in proteins from several pathogenic fungi, including both human and plant pathogens (By similarity). The CFEM domain adopts a novel helical-basket fold that consists of six alpha-helices, and is uniquely stabilized by four disulfide bonds formed by its 8 signature cysteines (By similarity).</text>
</comment>
<comment type="PTM">
    <text evidence="8">The GPI-anchor is attached to the protein in the endoplasmic reticulum and serves to target the protein to the cell surface. There, the glucosamine-inositol phospholipid moiety is cleaved off and the GPI-modified mannoprotein is covalently attached via its lipidless GPI glycan remnant to the 1,6-beta-glucan of the outer cell wall layer.</text>
</comment>
<comment type="similarity">
    <text evidence="8">Belongs to the RBT5 family.</text>
</comment>
<name>CFMB_ARTBC</name>
<feature type="signal peptide" evidence="4">
    <location>
        <begin position="1"/>
        <end position="18"/>
    </location>
</feature>
<feature type="chain" id="PRO_5003054633" description="GPI-anchored hemophore ARB_02741">
    <location>
        <begin position="19"/>
        <end position="163"/>
    </location>
</feature>
<feature type="propeptide" id="PRO_0000434906" description="Removed in mature form" evidence="4">
    <location>
        <begin position="164"/>
        <end position="186"/>
    </location>
</feature>
<feature type="domain" description="CFEM" evidence="5">
    <location>
        <begin position="19"/>
        <end position="108"/>
    </location>
</feature>
<feature type="region of interest" description="Disordered" evidence="6">
    <location>
        <begin position="89"/>
        <end position="159"/>
    </location>
</feature>
<feature type="compositionally biased region" description="Low complexity" evidence="6">
    <location>
        <begin position="96"/>
        <end position="131"/>
    </location>
</feature>
<feature type="compositionally biased region" description="Gly residues" evidence="6">
    <location>
        <begin position="132"/>
        <end position="144"/>
    </location>
</feature>
<feature type="compositionally biased region" description="Polar residues" evidence="6">
    <location>
        <begin position="148"/>
        <end position="159"/>
    </location>
</feature>
<feature type="binding site" description="axial binding residue" evidence="5">
    <location>
        <position position="45"/>
    </location>
    <ligand>
        <name>heme</name>
        <dbReference type="ChEBI" id="CHEBI:30413"/>
    </ligand>
    <ligandPart>
        <name>Fe</name>
        <dbReference type="ChEBI" id="CHEBI:18248"/>
    </ligandPart>
</feature>
<feature type="lipid moiety-binding region" description="GPI-anchor amidated glycine" evidence="4">
    <location>
        <position position="163"/>
    </location>
</feature>
<feature type="disulfide bond" evidence="5">
    <location>
        <begin position="26"/>
        <end position="67"/>
    </location>
</feature>
<feature type="disulfide bond" evidence="5">
    <location>
        <begin position="30"/>
        <end position="62"/>
    </location>
</feature>
<feature type="disulfide bond" evidence="5">
    <location>
        <begin position="40"/>
        <end position="48"/>
    </location>
</feature>
<feature type="disulfide bond" evidence="5">
    <location>
        <begin position="50"/>
        <end position="83"/>
    </location>
</feature>
<keyword id="KW-1003">Cell membrane</keyword>
<keyword id="KW-0134">Cell wall</keyword>
<keyword id="KW-1015">Disulfide bond</keyword>
<keyword id="KW-0325">Glycoprotein</keyword>
<keyword id="KW-0336">GPI-anchor</keyword>
<keyword id="KW-0349">Heme</keyword>
<keyword id="KW-0408">Iron</keyword>
<keyword id="KW-0449">Lipoprotein</keyword>
<keyword id="KW-0472">Membrane</keyword>
<keyword id="KW-0479">Metal-binding</keyword>
<keyword id="KW-1185">Reference proteome</keyword>
<keyword id="KW-0964">Secreted</keyword>
<keyword id="KW-0732">Signal</keyword>
<evidence type="ECO:0000250" key="1">
    <source>
        <dbReference type="UniProtKB" id="Q4WLB9"/>
    </source>
</evidence>
<evidence type="ECO:0000250" key="2">
    <source>
        <dbReference type="UniProtKB" id="Q59UT4"/>
    </source>
</evidence>
<evidence type="ECO:0000250" key="3">
    <source>
        <dbReference type="UniProtKB" id="Q5A0X8"/>
    </source>
</evidence>
<evidence type="ECO:0000255" key="4"/>
<evidence type="ECO:0000255" key="5">
    <source>
        <dbReference type="PROSITE-ProRule" id="PRU01356"/>
    </source>
</evidence>
<evidence type="ECO:0000256" key="6">
    <source>
        <dbReference type="SAM" id="MobiDB-lite"/>
    </source>
</evidence>
<evidence type="ECO:0000269" key="7">
    <source>
    </source>
</evidence>
<evidence type="ECO:0000305" key="8"/>
<dbReference type="EMBL" id="ABSU01000030">
    <property type="protein sequence ID" value="EFE30369.1"/>
    <property type="molecule type" value="Genomic_DNA"/>
</dbReference>
<dbReference type="RefSeq" id="XP_003011009.1">
    <property type="nucleotide sequence ID" value="XM_003010963.1"/>
</dbReference>
<dbReference type="SMR" id="D4B2Q8"/>
<dbReference type="STRING" id="663331.D4B2Q8"/>
<dbReference type="GeneID" id="9525126"/>
<dbReference type="KEGG" id="abe:ARB_02741"/>
<dbReference type="eggNOG" id="ENOG502SD7M">
    <property type="taxonomic scope" value="Eukaryota"/>
</dbReference>
<dbReference type="HOGENOM" id="CLU_063084_2_1_1"/>
<dbReference type="OMA" id="HCQKPEL"/>
<dbReference type="OrthoDB" id="3767534at2759"/>
<dbReference type="Proteomes" id="UP000008866">
    <property type="component" value="Unassembled WGS sequence"/>
</dbReference>
<dbReference type="GO" id="GO:0005576">
    <property type="term" value="C:extracellular region"/>
    <property type="evidence" value="ECO:0007669"/>
    <property type="project" value="UniProtKB-SubCell"/>
</dbReference>
<dbReference type="GO" id="GO:0005886">
    <property type="term" value="C:plasma membrane"/>
    <property type="evidence" value="ECO:0007669"/>
    <property type="project" value="UniProtKB-SubCell"/>
</dbReference>
<dbReference type="GO" id="GO:0098552">
    <property type="term" value="C:side of membrane"/>
    <property type="evidence" value="ECO:0007669"/>
    <property type="project" value="UniProtKB-KW"/>
</dbReference>
<dbReference type="GO" id="GO:0046872">
    <property type="term" value="F:metal ion binding"/>
    <property type="evidence" value="ECO:0007669"/>
    <property type="project" value="UniProtKB-KW"/>
</dbReference>
<dbReference type="InterPro" id="IPR051735">
    <property type="entry name" value="CFEM_domain"/>
</dbReference>
<dbReference type="InterPro" id="IPR008427">
    <property type="entry name" value="Extracellular_membr_CFEM_dom"/>
</dbReference>
<dbReference type="PANTHER" id="PTHR37928">
    <property type="entry name" value="CFEM DOMAIN PROTEIN (AFU_ORTHOLOGUE AFUA_6G14090)"/>
    <property type="match status" value="1"/>
</dbReference>
<dbReference type="PANTHER" id="PTHR37928:SF2">
    <property type="entry name" value="GPI ANCHORED CFEM DOMAIN PROTEIN (AFU_ORTHOLOGUE AFUA_6G10580)"/>
    <property type="match status" value="1"/>
</dbReference>
<dbReference type="Pfam" id="PF05730">
    <property type="entry name" value="CFEM"/>
    <property type="match status" value="1"/>
</dbReference>
<dbReference type="SMART" id="SM00747">
    <property type="entry name" value="CFEM"/>
    <property type="match status" value="1"/>
</dbReference>
<dbReference type="PROSITE" id="PS52012">
    <property type="entry name" value="CFEM"/>
    <property type="match status" value="1"/>
</dbReference>